<proteinExistence type="inferred from homology"/>
<sequence>MRCPSCFHNGTRVLDSRPVDEGRSIRRRRECESCLSRFTTFERVEESPLIVVKKEGTREEFNKEKILRGLIKACEKRPVSLRQLEEVTQSVERELRNLGISEVKSDMIGEIVMEELRDIDDVAYVRFASVYRQFKDLNVFIEELKDILQKERE</sequence>
<gene>
    <name evidence="1" type="primary">nrdR</name>
    <name type="ordered locus">BcerKBAB4_4411</name>
</gene>
<keyword id="KW-0067">ATP-binding</keyword>
<keyword id="KW-0238">DNA-binding</keyword>
<keyword id="KW-0479">Metal-binding</keyword>
<keyword id="KW-0547">Nucleotide-binding</keyword>
<keyword id="KW-0678">Repressor</keyword>
<keyword id="KW-0804">Transcription</keyword>
<keyword id="KW-0805">Transcription regulation</keyword>
<keyword id="KW-0862">Zinc</keyword>
<keyword id="KW-0863">Zinc-finger</keyword>
<feature type="chain" id="PRO_1000124470" description="Transcriptional repressor NrdR">
    <location>
        <begin position="1"/>
        <end position="153"/>
    </location>
</feature>
<feature type="domain" description="ATP-cone" evidence="1">
    <location>
        <begin position="49"/>
        <end position="139"/>
    </location>
</feature>
<feature type="zinc finger region" evidence="1">
    <location>
        <begin position="3"/>
        <end position="34"/>
    </location>
</feature>
<name>NRDR_BACMK</name>
<dbReference type="EMBL" id="CP000903">
    <property type="protein sequence ID" value="ABY45570.1"/>
    <property type="molecule type" value="Genomic_DNA"/>
</dbReference>
<dbReference type="RefSeq" id="WP_001203686.1">
    <property type="nucleotide sequence ID" value="NZ_CAKMRX030000126.1"/>
</dbReference>
<dbReference type="SMR" id="A9VJP3"/>
<dbReference type="GeneID" id="92884824"/>
<dbReference type="KEGG" id="bwe:BcerKBAB4_4411"/>
<dbReference type="eggNOG" id="COG1327">
    <property type="taxonomic scope" value="Bacteria"/>
</dbReference>
<dbReference type="HOGENOM" id="CLU_108412_0_0_9"/>
<dbReference type="Proteomes" id="UP000002154">
    <property type="component" value="Chromosome"/>
</dbReference>
<dbReference type="GO" id="GO:0005524">
    <property type="term" value="F:ATP binding"/>
    <property type="evidence" value="ECO:0007669"/>
    <property type="project" value="UniProtKB-KW"/>
</dbReference>
<dbReference type="GO" id="GO:0003677">
    <property type="term" value="F:DNA binding"/>
    <property type="evidence" value="ECO:0007669"/>
    <property type="project" value="UniProtKB-KW"/>
</dbReference>
<dbReference type="GO" id="GO:0008270">
    <property type="term" value="F:zinc ion binding"/>
    <property type="evidence" value="ECO:0007669"/>
    <property type="project" value="UniProtKB-UniRule"/>
</dbReference>
<dbReference type="GO" id="GO:0045892">
    <property type="term" value="P:negative regulation of DNA-templated transcription"/>
    <property type="evidence" value="ECO:0007669"/>
    <property type="project" value="UniProtKB-UniRule"/>
</dbReference>
<dbReference type="HAMAP" id="MF_00440">
    <property type="entry name" value="NrdR"/>
    <property type="match status" value="1"/>
</dbReference>
<dbReference type="InterPro" id="IPR005144">
    <property type="entry name" value="ATP-cone_dom"/>
</dbReference>
<dbReference type="InterPro" id="IPR055173">
    <property type="entry name" value="NrdR-like_N"/>
</dbReference>
<dbReference type="InterPro" id="IPR003796">
    <property type="entry name" value="RNR_NrdR-like"/>
</dbReference>
<dbReference type="NCBIfam" id="TIGR00244">
    <property type="entry name" value="transcriptional regulator NrdR"/>
    <property type="match status" value="1"/>
</dbReference>
<dbReference type="PANTHER" id="PTHR30455">
    <property type="entry name" value="TRANSCRIPTIONAL REPRESSOR NRDR"/>
    <property type="match status" value="1"/>
</dbReference>
<dbReference type="PANTHER" id="PTHR30455:SF2">
    <property type="entry name" value="TRANSCRIPTIONAL REPRESSOR NRDR"/>
    <property type="match status" value="1"/>
</dbReference>
<dbReference type="Pfam" id="PF03477">
    <property type="entry name" value="ATP-cone"/>
    <property type="match status" value="1"/>
</dbReference>
<dbReference type="Pfam" id="PF22811">
    <property type="entry name" value="Zn_ribbon_NrdR"/>
    <property type="match status" value="1"/>
</dbReference>
<dbReference type="PROSITE" id="PS51161">
    <property type="entry name" value="ATP_CONE"/>
    <property type="match status" value="1"/>
</dbReference>
<protein>
    <recommendedName>
        <fullName evidence="1">Transcriptional repressor NrdR</fullName>
    </recommendedName>
</protein>
<evidence type="ECO:0000255" key="1">
    <source>
        <dbReference type="HAMAP-Rule" id="MF_00440"/>
    </source>
</evidence>
<organism>
    <name type="scientific">Bacillus mycoides (strain KBAB4)</name>
    <name type="common">Bacillus weihenstephanensis</name>
    <dbReference type="NCBI Taxonomy" id="315730"/>
    <lineage>
        <taxon>Bacteria</taxon>
        <taxon>Bacillati</taxon>
        <taxon>Bacillota</taxon>
        <taxon>Bacilli</taxon>
        <taxon>Bacillales</taxon>
        <taxon>Bacillaceae</taxon>
        <taxon>Bacillus</taxon>
        <taxon>Bacillus cereus group</taxon>
    </lineage>
</organism>
<comment type="function">
    <text evidence="1">Negatively regulates transcription of bacterial ribonucleotide reductase nrd genes and operons by binding to NrdR-boxes.</text>
</comment>
<comment type="cofactor">
    <cofactor evidence="1">
        <name>Zn(2+)</name>
        <dbReference type="ChEBI" id="CHEBI:29105"/>
    </cofactor>
    <text evidence="1">Binds 1 zinc ion.</text>
</comment>
<comment type="similarity">
    <text evidence="1">Belongs to the NrdR family.</text>
</comment>
<accession>A9VJP3</accession>
<reference key="1">
    <citation type="journal article" date="2008" name="Chem. Biol. Interact.">
        <title>Extending the Bacillus cereus group genomics to putative food-borne pathogens of different toxicity.</title>
        <authorList>
            <person name="Lapidus A."/>
            <person name="Goltsman E."/>
            <person name="Auger S."/>
            <person name="Galleron N."/>
            <person name="Segurens B."/>
            <person name="Dossat C."/>
            <person name="Land M.L."/>
            <person name="Broussolle V."/>
            <person name="Brillard J."/>
            <person name="Guinebretiere M.-H."/>
            <person name="Sanchis V."/>
            <person name="Nguen-the C."/>
            <person name="Lereclus D."/>
            <person name="Richardson P."/>
            <person name="Wincker P."/>
            <person name="Weissenbach J."/>
            <person name="Ehrlich S.D."/>
            <person name="Sorokin A."/>
        </authorList>
    </citation>
    <scope>NUCLEOTIDE SEQUENCE [LARGE SCALE GENOMIC DNA]</scope>
    <source>
        <strain>KBAB4</strain>
    </source>
</reference>